<accession>B8J0U1</accession>
<evidence type="ECO:0000255" key="1">
    <source>
        <dbReference type="HAMAP-Rule" id="MF_00226"/>
    </source>
</evidence>
<reference key="1">
    <citation type="submission" date="2009-01" db="EMBL/GenBank/DDBJ databases">
        <title>Complete sequence of Desulfovibrio desulfuricans subsp. desulfuricans str. ATCC 27774.</title>
        <authorList>
            <consortium name="US DOE Joint Genome Institute"/>
            <person name="Lucas S."/>
            <person name="Copeland A."/>
            <person name="Lapidus A."/>
            <person name="Glavina del Rio T."/>
            <person name="Tice H."/>
            <person name="Bruce D."/>
            <person name="Goodwin L."/>
            <person name="Pitluck S."/>
            <person name="Sims D."/>
            <person name="Lu M."/>
            <person name="Kiss H."/>
            <person name="Meineke L."/>
            <person name="Brettin T."/>
            <person name="Detter J.C."/>
            <person name="Han C."/>
            <person name="Larimer F."/>
            <person name="Land M."/>
            <person name="Hauser L."/>
            <person name="Kyrpides N."/>
            <person name="Ovchinnikova G."/>
            <person name="Hazen T.C."/>
        </authorList>
    </citation>
    <scope>NUCLEOTIDE SEQUENCE [LARGE SCALE GENOMIC DNA]</scope>
    <source>
        <strain>ATCC 27774 / DSM 6949 / MB</strain>
    </source>
</reference>
<protein>
    <recommendedName>
        <fullName evidence="1">CinA-like protein</fullName>
    </recommendedName>
</protein>
<feature type="chain" id="PRO_1000124982" description="CinA-like protein">
    <location>
        <begin position="1"/>
        <end position="425"/>
    </location>
</feature>
<dbReference type="EMBL" id="CP001358">
    <property type="protein sequence ID" value="ACL49368.1"/>
    <property type="molecule type" value="Genomic_DNA"/>
</dbReference>
<dbReference type="SMR" id="B8J0U1"/>
<dbReference type="STRING" id="525146.Ddes_1466"/>
<dbReference type="KEGG" id="dds:Ddes_1466"/>
<dbReference type="eggNOG" id="COG1058">
    <property type="taxonomic scope" value="Bacteria"/>
</dbReference>
<dbReference type="eggNOG" id="COG1546">
    <property type="taxonomic scope" value="Bacteria"/>
</dbReference>
<dbReference type="HOGENOM" id="CLU_030805_9_3_7"/>
<dbReference type="CDD" id="cd00885">
    <property type="entry name" value="cinA"/>
    <property type="match status" value="1"/>
</dbReference>
<dbReference type="Gene3D" id="3.30.70.2860">
    <property type="match status" value="1"/>
</dbReference>
<dbReference type="Gene3D" id="3.90.950.20">
    <property type="entry name" value="CinA-like"/>
    <property type="match status" value="1"/>
</dbReference>
<dbReference type="Gene3D" id="3.40.980.10">
    <property type="entry name" value="MoaB/Mog-like domain"/>
    <property type="match status" value="1"/>
</dbReference>
<dbReference type="HAMAP" id="MF_00226_B">
    <property type="entry name" value="CinA_B"/>
    <property type="match status" value="1"/>
</dbReference>
<dbReference type="InterPro" id="IPR050101">
    <property type="entry name" value="CinA"/>
</dbReference>
<dbReference type="InterPro" id="IPR036653">
    <property type="entry name" value="CinA-like_C"/>
</dbReference>
<dbReference type="InterPro" id="IPR008136">
    <property type="entry name" value="CinA_C"/>
</dbReference>
<dbReference type="InterPro" id="IPR041424">
    <property type="entry name" value="CinA_KH"/>
</dbReference>
<dbReference type="InterPro" id="IPR008135">
    <property type="entry name" value="Competence-induced_CinA"/>
</dbReference>
<dbReference type="InterPro" id="IPR036425">
    <property type="entry name" value="MoaB/Mog-like_dom_sf"/>
</dbReference>
<dbReference type="InterPro" id="IPR001453">
    <property type="entry name" value="MoaB/Mog_dom"/>
</dbReference>
<dbReference type="NCBIfam" id="TIGR00200">
    <property type="entry name" value="cinA_nterm"/>
    <property type="match status" value="1"/>
</dbReference>
<dbReference type="NCBIfam" id="TIGR00199">
    <property type="entry name" value="PncC_domain"/>
    <property type="match status" value="1"/>
</dbReference>
<dbReference type="NCBIfam" id="NF001813">
    <property type="entry name" value="PRK00549.1"/>
    <property type="match status" value="1"/>
</dbReference>
<dbReference type="PANTHER" id="PTHR13939">
    <property type="entry name" value="NICOTINAMIDE-NUCLEOTIDE AMIDOHYDROLASE PNCC"/>
    <property type="match status" value="1"/>
</dbReference>
<dbReference type="PANTHER" id="PTHR13939:SF0">
    <property type="entry name" value="NMN AMIDOHYDROLASE-LIKE PROTEIN YFAY"/>
    <property type="match status" value="1"/>
</dbReference>
<dbReference type="Pfam" id="PF02464">
    <property type="entry name" value="CinA"/>
    <property type="match status" value="1"/>
</dbReference>
<dbReference type="Pfam" id="PF18146">
    <property type="entry name" value="CinA_KH"/>
    <property type="match status" value="1"/>
</dbReference>
<dbReference type="Pfam" id="PF00994">
    <property type="entry name" value="MoCF_biosynth"/>
    <property type="match status" value="1"/>
</dbReference>
<dbReference type="PIRSF" id="PIRSF006728">
    <property type="entry name" value="CinA"/>
    <property type="match status" value="1"/>
</dbReference>
<dbReference type="SMART" id="SM00852">
    <property type="entry name" value="MoCF_biosynth"/>
    <property type="match status" value="1"/>
</dbReference>
<dbReference type="SUPFAM" id="SSF142433">
    <property type="entry name" value="CinA-like"/>
    <property type="match status" value="1"/>
</dbReference>
<dbReference type="SUPFAM" id="SSF53218">
    <property type="entry name" value="Molybdenum cofactor biosynthesis proteins"/>
    <property type="match status" value="1"/>
</dbReference>
<proteinExistence type="inferred from homology"/>
<name>CINAL_DESDA</name>
<sequence length="425" mass="44931">MRAEIISVGTELLLGHTINTDAAHVGRALSALGMDLLQVHTVGDNAGRLEAALREALNCADVVITTGGLGPTDDDMTKETVARVLGAPLEEHKDSLRRLREYFGSRPIAANQLKQAWLPRGSTAFPNRAGTAPGCAVPGKPGQWVILLPGPPSELLPMLEDSVMPFLQRMGGAVIASFMVRTFGIGEGSAALRIADLTEGANPTVAPYASDAEMFVRVTAKAENAEAAEALAKPVVDAVRGRLGDVVYGVNVSGLEAVVVEQLRQHRRSLAIAESCTGGLLAKRITDQPGASEVFGYGLITYANEAKTRLLGVPEEQLACYGAVSPQVARSMAVGVRERYGADYGLGITGVAGPGGGTEEKPVGLVYVALSCSNAVWLRVLRPQGRYLGREWTRRLASSHALDMLRRHMAGLPVEAGWADGLPQD</sequence>
<gene>
    <name type="ordered locus">Ddes_1466</name>
</gene>
<organism>
    <name type="scientific">Desulfovibrio desulfuricans (strain ATCC 27774 / DSM 6949 / MB)</name>
    <dbReference type="NCBI Taxonomy" id="525146"/>
    <lineage>
        <taxon>Bacteria</taxon>
        <taxon>Pseudomonadati</taxon>
        <taxon>Thermodesulfobacteriota</taxon>
        <taxon>Desulfovibrionia</taxon>
        <taxon>Desulfovibrionales</taxon>
        <taxon>Desulfovibrionaceae</taxon>
        <taxon>Desulfovibrio</taxon>
    </lineage>
</organism>
<comment type="similarity">
    <text evidence="1">Belongs to the CinA family.</text>
</comment>